<gene>
    <name type="ORF">CG42540</name>
</gene>
<accession>Q9VZA4</accession>
<accession>Q5BI93</accession>
<accession>Q8IRA9</accession>
<accession>Q8T0L0</accession>
<accession>Q95SR9</accession>
<accession>Q9VZA3</accession>
<proteinExistence type="evidence at transcript level"/>
<comment type="subcellular location">
    <subcellularLocation>
        <location evidence="1">Membrane</location>
        <topology evidence="1">Single-pass membrane protein</topology>
    </subcellularLocation>
</comment>
<comment type="alternative products">
    <event type="alternative splicing"/>
    <isoform>
        <id>Q9VZA4-1</id>
        <name evidence="3">B</name>
        <sequence type="displayed"/>
    </isoform>
    <isoform>
        <id>Q9VZA4-2</id>
        <name evidence="3">A</name>
        <sequence type="described" ref="VSP_052614 VSP_052615"/>
    </isoform>
    <isoform>
        <id>Q9VZA4-3</id>
        <name evidence="3">C</name>
        <sequence type="described" ref="VSP_052613 VSP_052616"/>
    </isoform>
    <isoform>
        <id>Q9VZA4-4</id>
        <name>F</name>
        <sequence type="described" ref="VSP_037881"/>
    </isoform>
</comment>
<comment type="RNA editing">
    <location>
        <position position="297" evidence="4 5"/>
    </location>
    <text evidence="5">Partially edited. Target of Adar.</text>
</comment>
<comment type="similarity">
    <text evidence="1">Belongs to the band 7/mec-2 family.</text>
</comment>
<keyword id="KW-0025">Alternative splicing</keyword>
<keyword id="KW-0472">Membrane</keyword>
<keyword id="KW-1185">Reference proteome</keyword>
<keyword id="KW-0691">RNA editing</keyword>
<keyword id="KW-0812">Transmembrane</keyword>
<keyword id="KW-1133">Transmembrane helix</keyword>
<dbReference type="EMBL" id="AE014296">
    <property type="protein sequence ID" value="AAF47920.2"/>
    <property type="molecule type" value="Genomic_DNA"/>
</dbReference>
<dbReference type="EMBL" id="AE014296">
    <property type="protein sequence ID" value="AAF47921.3"/>
    <property type="molecule type" value="Genomic_DNA"/>
</dbReference>
<dbReference type="EMBL" id="AE014296">
    <property type="protein sequence ID" value="AAN11610.2"/>
    <property type="molecule type" value="Genomic_DNA"/>
</dbReference>
<dbReference type="EMBL" id="AY060624">
    <property type="protein sequence ID" value="AAL28172.1"/>
    <property type="molecule type" value="mRNA"/>
</dbReference>
<dbReference type="EMBL" id="AY069196">
    <property type="protein sequence ID" value="AAL39341.1"/>
    <property type="molecule type" value="mRNA"/>
</dbReference>
<dbReference type="EMBL" id="BT021331">
    <property type="protein sequence ID" value="AAX33479.1"/>
    <property type="molecule type" value="mRNA"/>
</dbReference>
<dbReference type="RefSeq" id="NP_647917.3">
    <molecule id="Q9VZA4-2"/>
    <property type="nucleotide sequence ID" value="NM_139660.5"/>
</dbReference>
<dbReference type="RefSeq" id="NP_652337.2">
    <molecule id="Q9VZA4-4"/>
    <property type="nucleotide sequence ID" value="NM_144080.3"/>
</dbReference>
<dbReference type="RefSeq" id="NP_729016.2">
    <molecule id="Q9VZA4-3"/>
    <property type="nucleotide sequence ID" value="NM_168095.3"/>
</dbReference>
<dbReference type="RefSeq" id="NP_729018.1">
    <molecule id="Q9VZA4-1"/>
    <property type="nucleotide sequence ID" value="NM_168096.3"/>
</dbReference>
<dbReference type="SMR" id="Q9VZA4"/>
<dbReference type="BioGRID" id="64036">
    <property type="interactions" value="4"/>
</dbReference>
<dbReference type="FunCoup" id="Q9VZA4">
    <property type="interactions" value="108"/>
</dbReference>
<dbReference type="IntAct" id="Q9VZA4">
    <property type="interactions" value="5"/>
</dbReference>
<dbReference type="STRING" id="7227.FBpp0293525"/>
<dbReference type="PaxDb" id="7227-FBpp0293525"/>
<dbReference type="DNASU" id="38562"/>
<dbReference type="EnsemblMetazoa" id="FBtr0301095">
    <molecule id="Q9VZA4-1"/>
    <property type="protein sequence ID" value="FBpp0290317"/>
    <property type="gene ID" value="FBgn0260657"/>
</dbReference>
<dbReference type="EnsemblMetazoa" id="FBtr0301096">
    <molecule id="Q9VZA4-3"/>
    <property type="protein sequence ID" value="FBpp0290318"/>
    <property type="gene ID" value="FBgn0260657"/>
</dbReference>
<dbReference type="EnsemblMetazoa" id="FBtr0301097">
    <molecule id="Q9VZA4-2"/>
    <property type="protein sequence ID" value="FBpp0290319"/>
    <property type="gene ID" value="FBgn0260657"/>
</dbReference>
<dbReference type="EnsemblMetazoa" id="FBtr0301098">
    <molecule id="Q9VZA4-4"/>
    <property type="protein sequence ID" value="FBpp0290320"/>
    <property type="gene ID" value="FBgn0260657"/>
</dbReference>
<dbReference type="GeneID" id="38562"/>
<dbReference type="KEGG" id="dme:Dmel_CG42540"/>
<dbReference type="UCSC" id="CG32245-RA">
    <molecule id="Q9VZA4-1"/>
    <property type="organism name" value="d. melanogaster"/>
</dbReference>
<dbReference type="AGR" id="FB:FBgn0260657"/>
<dbReference type="FlyBase" id="FBgn0260657">
    <property type="gene designation" value="CG42540"/>
</dbReference>
<dbReference type="VEuPathDB" id="VectorBase:FBgn0260657"/>
<dbReference type="eggNOG" id="KOG2621">
    <property type="taxonomic scope" value="Eukaryota"/>
</dbReference>
<dbReference type="GeneTree" id="ENSGT01030000234614"/>
<dbReference type="InParanoid" id="Q9VZA4"/>
<dbReference type="OrthoDB" id="2105077at2759"/>
<dbReference type="PhylomeDB" id="Q9VZA4"/>
<dbReference type="Reactome" id="R-DME-2672351">
    <property type="pathway name" value="Stimuli-sensing channels"/>
</dbReference>
<dbReference type="Reactome" id="R-DME-373753">
    <property type="pathway name" value="Nephrin family interactions"/>
</dbReference>
<dbReference type="Reactome" id="R-DME-6798695">
    <property type="pathway name" value="Neutrophil degranulation"/>
</dbReference>
<dbReference type="Reactome" id="R-DME-8980692">
    <property type="pathway name" value="RHOA GTPase cycle"/>
</dbReference>
<dbReference type="Reactome" id="R-DME-9013026">
    <property type="pathway name" value="RHOB GTPase cycle"/>
</dbReference>
<dbReference type="Reactome" id="R-DME-9013406">
    <property type="pathway name" value="RHOQ GTPase cycle"/>
</dbReference>
<dbReference type="Reactome" id="R-DME-9013407">
    <property type="pathway name" value="RHOH GTPase cycle"/>
</dbReference>
<dbReference type="BioGRID-ORCS" id="38562">
    <property type="hits" value="0 hits in 3 CRISPR screens"/>
</dbReference>
<dbReference type="ChiTaRS" id="CG42540">
    <property type="organism name" value="fly"/>
</dbReference>
<dbReference type="GenomeRNAi" id="38562"/>
<dbReference type="PRO" id="PR:Q9VZA4"/>
<dbReference type="Proteomes" id="UP000000803">
    <property type="component" value="Chromosome 3L"/>
</dbReference>
<dbReference type="Bgee" id="FBgn0260657">
    <property type="expression patterns" value="Expressed in transmedullary neuron Tm5c (Drosophila) in brain and 159 other cell types or tissues"/>
</dbReference>
<dbReference type="ExpressionAtlas" id="Q9VZA4">
    <property type="expression patterns" value="baseline and differential"/>
</dbReference>
<dbReference type="GO" id="GO:0005886">
    <property type="term" value="C:plasma membrane"/>
    <property type="evidence" value="ECO:0000318"/>
    <property type="project" value="GO_Central"/>
</dbReference>
<dbReference type="CDD" id="cd03403">
    <property type="entry name" value="SPFH_stomatin"/>
    <property type="match status" value="1"/>
</dbReference>
<dbReference type="FunFam" id="3.30.479.30:FF:000002">
    <property type="entry name" value="band 7 protein AGAP004871"/>
    <property type="match status" value="1"/>
</dbReference>
<dbReference type="Gene3D" id="6.10.250.2090">
    <property type="match status" value="1"/>
</dbReference>
<dbReference type="Gene3D" id="3.30.479.30">
    <property type="entry name" value="Band 7 domain"/>
    <property type="match status" value="1"/>
</dbReference>
<dbReference type="InterPro" id="IPR043202">
    <property type="entry name" value="Band-7_stomatin-like"/>
</dbReference>
<dbReference type="InterPro" id="IPR001107">
    <property type="entry name" value="Band_7"/>
</dbReference>
<dbReference type="InterPro" id="IPR036013">
    <property type="entry name" value="Band_7/SPFH_dom_sf"/>
</dbReference>
<dbReference type="InterPro" id="IPR018080">
    <property type="entry name" value="Band_7/stomatin-like_CS"/>
</dbReference>
<dbReference type="InterPro" id="IPR001972">
    <property type="entry name" value="Stomatin_HflK_fam"/>
</dbReference>
<dbReference type="PANTHER" id="PTHR10264">
    <property type="entry name" value="BAND 7 PROTEIN-RELATED"/>
    <property type="match status" value="1"/>
</dbReference>
<dbReference type="PANTHER" id="PTHR10264:SF127">
    <property type="entry name" value="PODOCIN"/>
    <property type="match status" value="1"/>
</dbReference>
<dbReference type="Pfam" id="PF01145">
    <property type="entry name" value="Band_7"/>
    <property type="match status" value="1"/>
</dbReference>
<dbReference type="PRINTS" id="PR00721">
    <property type="entry name" value="STOMATIN"/>
</dbReference>
<dbReference type="SMART" id="SM00244">
    <property type="entry name" value="PHB"/>
    <property type="match status" value="1"/>
</dbReference>
<dbReference type="SUPFAM" id="SSF117892">
    <property type="entry name" value="Band 7/SPFH domain"/>
    <property type="match status" value="1"/>
</dbReference>
<dbReference type="PROSITE" id="PS01270">
    <property type="entry name" value="BAND_7"/>
    <property type="match status" value="1"/>
</dbReference>
<reference evidence="10" key="1">
    <citation type="journal article" date="2000" name="Science">
        <title>The genome sequence of Drosophila melanogaster.</title>
        <authorList>
            <person name="Adams M.D."/>
            <person name="Celniker S.E."/>
            <person name="Holt R.A."/>
            <person name="Evans C.A."/>
            <person name="Gocayne J.D."/>
            <person name="Amanatides P.G."/>
            <person name="Scherer S.E."/>
            <person name="Li P.W."/>
            <person name="Hoskins R.A."/>
            <person name="Galle R.F."/>
            <person name="George R.A."/>
            <person name="Lewis S.E."/>
            <person name="Richards S."/>
            <person name="Ashburner M."/>
            <person name="Henderson S.N."/>
            <person name="Sutton G.G."/>
            <person name="Wortman J.R."/>
            <person name="Yandell M.D."/>
            <person name="Zhang Q."/>
            <person name="Chen L.X."/>
            <person name="Brandon R.C."/>
            <person name="Rogers Y.-H.C."/>
            <person name="Blazej R.G."/>
            <person name="Champe M."/>
            <person name="Pfeiffer B.D."/>
            <person name="Wan K.H."/>
            <person name="Doyle C."/>
            <person name="Baxter E.G."/>
            <person name="Helt G."/>
            <person name="Nelson C.R."/>
            <person name="Miklos G.L.G."/>
            <person name="Abril J.F."/>
            <person name="Agbayani A."/>
            <person name="An H.-J."/>
            <person name="Andrews-Pfannkoch C."/>
            <person name="Baldwin D."/>
            <person name="Ballew R.M."/>
            <person name="Basu A."/>
            <person name="Baxendale J."/>
            <person name="Bayraktaroglu L."/>
            <person name="Beasley E.M."/>
            <person name="Beeson K.Y."/>
            <person name="Benos P.V."/>
            <person name="Berman B.P."/>
            <person name="Bhandari D."/>
            <person name="Bolshakov S."/>
            <person name="Borkova D."/>
            <person name="Botchan M.R."/>
            <person name="Bouck J."/>
            <person name="Brokstein P."/>
            <person name="Brottier P."/>
            <person name="Burtis K.C."/>
            <person name="Busam D.A."/>
            <person name="Butler H."/>
            <person name="Cadieu E."/>
            <person name="Center A."/>
            <person name="Chandra I."/>
            <person name="Cherry J.M."/>
            <person name="Cawley S."/>
            <person name="Dahlke C."/>
            <person name="Davenport L.B."/>
            <person name="Davies P."/>
            <person name="de Pablos B."/>
            <person name="Delcher A."/>
            <person name="Deng Z."/>
            <person name="Mays A.D."/>
            <person name="Dew I."/>
            <person name="Dietz S.M."/>
            <person name="Dodson K."/>
            <person name="Doup L.E."/>
            <person name="Downes M."/>
            <person name="Dugan-Rocha S."/>
            <person name="Dunkov B.C."/>
            <person name="Dunn P."/>
            <person name="Durbin K.J."/>
            <person name="Evangelista C.C."/>
            <person name="Ferraz C."/>
            <person name="Ferriera S."/>
            <person name="Fleischmann W."/>
            <person name="Fosler C."/>
            <person name="Gabrielian A.E."/>
            <person name="Garg N.S."/>
            <person name="Gelbart W.M."/>
            <person name="Glasser K."/>
            <person name="Glodek A."/>
            <person name="Gong F."/>
            <person name="Gorrell J.H."/>
            <person name="Gu Z."/>
            <person name="Guan P."/>
            <person name="Harris M."/>
            <person name="Harris N.L."/>
            <person name="Harvey D.A."/>
            <person name="Heiman T.J."/>
            <person name="Hernandez J.R."/>
            <person name="Houck J."/>
            <person name="Hostin D."/>
            <person name="Houston K.A."/>
            <person name="Howland T.J."/>
            <person name="Wei M.-H."/>
            <person name="Ibegwam C."/>
            <person name="Jalali M."/>
            <person name="Kalush F."/>
            <person name="Karpen G.H."/>
            <person name="Ke Z."/>
            <person name="Kennison J.A."/>
            <person name="Ketchum K.A."/>
            <person name="Kimmel B.E."/>
            <person name="Kodira C.D."/>
            <person name="Kraft C.L."/>
            <person name="Kravitz S."/>
            <person name="Kulp D."/>
            <person name="Lai Z."/>
            <person name="Lasko P."/>
            <person name="Lei Y."/>
            <person name="Levitsky A.A."/>
            <person name="Li J.H."/>
            <person name="Li Z."/>
            <person name="Liang Y."/>
            <person name="Lin X."/>
            <person name="Liu X."/>
            <person name="Mattei B."/>
            <person name="McIntosh T.C."/>
            <person name="McLeod M.P."/>
            <person name="McPherson D."/>
            <person name="Merkulov G."/>
            <person name="Milshina N.V."/>
            <person name="Mobarry C."/>
            <person name="Morris J."/>
            <person name="Moshrefi A."/>
            <person name="Mount S.M."/>
            <person name="Moy M."/>
            <person name="Murphy B."/>
            <person name="Murphy L."/>
            <person name="Muzny D.M."/>
            <person name="Nelson D.L."/>
            <person name="Nelson D.R."/>
            <person name="Nelson K.A."/>
            <person name="Nixon K."/>
            <person name="Nusskern D.R."/>
            <person name="Pacleb J.M."/>
            <person name="Palazzolo M."/>
            <person name="Pittman G.S."/>
            <person name="Pan S."/>
            <person name="Pollard J."/>
            <person name="Puri V."/>
            <person name="Reese M.G."/>
            <person name="Reinert K."/>
            <person name="Remington K."/>
            <person name="Saunders R.D.C."/>
            <person name="Scheeler F."/>
            <person name="Shen H."/>
            <person name="Shue B.C."/>
            <person name="Siden-Kiamos I."/>
            <person name="Simpson M."/>
            <person name="Skupski M.P."/>
            <person name="Smith T.J."/>
            <person name="Spier E."/>
            <person name="Spradling A.C."/>
            <person name="Stapleton M."/>
            <person name="Strong R."/>
            <person name="Sun E."/>
            <person name="Svirskas R."/>
            <person name="Tector C."/>
            <person name="Turner R."/>
            <person name="Venter E."/>
            <person name="Wang A.H."/>
            <person name="Wang X."/>
            <person name="Wang Z.-Y."/>
            <person name="Wassarman D.A."/>
            <person name="Weinstock G.M."/>
            <person name="Weissenbach J."/>
            <person name="Williams S.M."/>
            <person name="Woodage T."/>
            <person name="Worley K.C."/>
            <person name="Wu D."/>
            <person name="Yang S."/>
            <person name="Yao Q.A."/>
            <person name="Ye J."/>
            <person name="Yeh R.-F."/>
            <person name="Zaveri J.S."/>
            <person name="Zhan M."/>
            <person name="Zhang G."/>
            <person name="Zhao Q."/>
            <person name="Zheng L."/>
            <person name="Zheng X.H."/>
            <person name="Zhong F.N."/>
            <person name="Zhong W."/>
            <person name="Zhou X."/>
            <person name="Zhu S.C."/>
            <person name="Zhu X."/>
            <person name="Smith H.O."/>
            <person name="Gibbs R.A."/>
            <person name="Myers E.W."/>
            <person name="Rubin G.M."/>
            <person name="Venter J.C."/>
        </authorList>
    </citation>
    <scope>NUCLEOTIDE SEQUENCE [LARGE SCALE GENOMIC DNA]</scope>
    <source>
        <strain evidence="3">Berkeley</strain>
    </source>
</reference>
<reference evidence="9 10" key="2">
    <citation type="journal article" date="2002" name="Genome Biol.">
        <title>Annotation of the Drosophila melanogaster euchromatic genome: a systematic review.</title>
        <authorList>
            <person name="Misra S."/>
            <person name="Crosby M.A."/>
            <person name="Mungall C.J."/>
            <person name="Matthews B.B."/>
            <person name="Campbell K.S."/>
            <person name="Hradecky P."/>
            <person name="Huang Y."/>
            <person name="Kaminker J.S."/>
            <person name="Millburn G.H."/>
            <person name="Prochnik S.E."/>
            <person name="Smith C.D."/>
            <person name="Tupy J.L."/>
            <person name="Whitfield E.J."/>
            <person name="Bayraktaroglu L."/>
            <person name="Berman B.P."/>
            <person name="Bettencourt B.R."/>
            <person name="Celniker S.E."/>
            <person name="de Grey A.D.N.J."/>
            <person name="Drysdale R.A."/>
            <person name="Harris N.L."/>
            <person name="Richter J."/>
            <person name="Russo S."/>
            <person name="Schroeder A.J."/>
            <person name="Shu S.Q."/>
            <person name="Stapleton M."/>
            <person name="Yamada C."/>
            <person name="Ashburner M."/>
            <person name="Gelbart W.M."/>
            <person name="Rubin G.M."/>
            <person name="Lewis S.E."/>
        </authorList>
    </citation>
    <scope>GENOME REANNOTATION</scope>
    <scope>ALTERNATIVE SPLICING</scope>
    <source>
        <strain>Berkeley</strain>
    </source>
</reference>
<reference evidence="9 11" key="3">
    <citation type="journal article" date="2002" name="Genome Biol.">
        <title>A Drosophila full-length cDNA resource.</title>
        <authorList>
            <person name="Stapleton M."/>
            <person name="Carlson J.W."/>
            <person name="Brokstein P."/>
            <person name="Yu C."/>
            <person name="Champe M."/>
            <person name="George R.A."/>
            <person name="Guarin H."/>
            <person name="Kronmiller B."/>
            <person name="Pacleb J.M."/>
            <person name="Park S."/>
            <person name="Wan K.H."/>
            <person name="Rubin G.M."/>
            <person name="Celniker S.E."/>
        </authorList>
    </citation>
    <scope>NUCLEOTIDE SEQUENCE [LARGE SCALE MRNA] (ISOFORMS A AND B)</scope>
    <scope>RNA EDITING OF POSITION 297</scope>
    <source>
        <strain evidence="11">Berkeley</strain>
        <tissue evidence="4">Head</tissue>
    </source>
</reference>
<reference evidence="9 12" key="4">
    <citation type="submission" date="2005-03" db="EMBL/GenBank/DDBJ databases">
        <authorList>
            <person name="Stapleton M."/>
            <person name="Carlson J.W."/>
            <person name="Chavez C."/>
            <person name="Frise E."/>
            <person name="George R.A."/>
            <person name="Pacleb J.M."/>
            <person name="Park S."/>
            <person name="Wan K.H."/>
            <person name="Yu C."/>
            <person name="Rubin G.M."/>
            <person name="Celniker S.E."/>
        </authorList>
    </citation>
    <scope>NUCLEOTIDE SEQUENCE [LARGE SCALE MRNA] (ISOFORM C)</scope>
    <source>
        <strain evidence="12">Berkeley</strain>
        <tissue>Embryo</tissue>
    </source>
</reference>
<reference evidence="9" key="5">
    <citation type="journal article" date="2006" name="RNA">
        <title>RNA editing in Drosophila melanogaster: new targets and functional consequences.</title>
        <authorList>
            <person name="Stapleton M."/>
            <person name="Carlson J.W."/>
            <person name="Celniker S.E."/>
        </authorList>
    </citation>
    <scope>RNA EDITING OF POSITION 297</scope>
</reference>
<evidence type="ECO:0000255" key="1"/>
<evidence type="ECO:0000256" key="2">
    <source>
        <dbReference type="SAM" id="MobiDB-lite"/>
    </source>
</evidence>
<evidence type="ECO:0000269" key="3">
    <source>
    </source>
</evidence>
<evidence type="ECO:0000269" key="4">
    <source>
    </source>
</evidence>
<evidence type="ECO:0000269" key="5">
    <source>
    </source>
</evidence>
<evidence type="ECO:0000303" key="6">
    <source>
    </source>
</evidence>
<evidence type="ECO:0000303" key="7">
    <source>
    </source>
</evidence>
<evidence type="ECO:0000303" key="8">
    <source ref="4"/>
</evidence>
<evidence type="ECO:0000305" key="9"/>
<evidence type="ECO:0000312" key="10">
    <source>
        <dbReference type="EMBL" id="AAF47920.2"/>
    </source>
</evidence>
<evidence type="ECO:0000312" key="11">
    <source>
        <dbReference type="EMBL" id="AAL28172.1"/>
    </source>
</evidence>
<evidence type="ECO:0000312" key="12">
    <source>
        <dbReference type="EMBL" id="AAX33479.1"/>
    </source>
</evidence>
<sequence>MPDSMMDMEHRDHQLHRQQQQSHHHQPPRLTASTSTFAPPAPAGSQSEERDRDRDRERDHHLHHHQSNNVASSPLPVTASIQLHQQQPQQQQQQQPLTQLQQPQLREREHHQQQQQQQQQMMQQPQQQQQMQQPQQQLPHSHHALMQQSQQQQAIHRAEARRADEEISDKASTCGKLLIFLSVALVIMTLPFSLFVCFKVVQEYERAVIFRLGRLMQGGAKGPGIFFILPCIDSYARVDLRTRTYDVPPQEVLTKDSVTVSVDAVVYYRVSNATVSIANVENAHHSTRLLAQTTLRNTMGTRHLHEILSERMTISGTMQVQLDEATDAWGIKVERVEIKDVRLPVQLQRAMAAEAEAAREARAKVIAAEGEQKASRALREASEVIGDSPAALQLRYLQTLNTISAEKNSTIVFPLPIDLITYFLKTNEATTQQNARAAAAAIGNTPPPLQLAPQQQMGQQQQPQYQQPQQQQQQYQPQQQQQQQQQQPQQQDQLYQQGQQISSAM</sequence>
<feature type="chain" id="PRO_0000311707" description="Band 7 protein CG42540">
    <location>
        <begin position="1"/>
        <end position="505"/>
    </location>
</feature>
<feature type="transmembrane region" description="Helical" evidence="1">
    <location>
        <begin position="178"/>
        <end position="198"/>
    </location>
</feature>
<feature type="region of interest" description="Disordered" evidence="2">
    <location>
        <begin position="1"/>
        <end position="164"/>
    </location>
</feature>
<feature type="region of interest" description="Disordered" evidence="2">
    <location>
        <begin position="443"/>
        <end position="505"/>
    </location>
</feature>
<feature type="compositionally biased region" description="Basic and acidic residues" evidence="2">
    <location>
        <begin position="47"/>
        <end position="60"/>
    </location>
</feature>
<feature type="compositionally biased region" description="Low complexity" evidence="2">
    <location>
        <begin position="82"/>
        <end position="104"/>
    </location>
</feature>
<feature type="compositionally biased region" description="Low complexity" evidence="2">
    <location>
        <begin position="113"/>
        <end position="139"/>
    </location>
</feature>
<feature type="compositionally biased region" description="Low complexity" evidence="2">
    <location>
        <begin position="451"/>
        <end position="505"/>
    </location>
</feature>
<feature type="splice variant" id="VSP_037881" description="In isoform F." evidence="9">
    <original>PDSMMDMEHRDHQLHRQQQQSHHHQPPRLTASTSTFAPPAPAGSQSEERDRDRDRERDHHLHHHQSNNVASSPLPVTASIQLHQQQPQQQQQQQPLTQLQQPQLREREHHQQQQQQQQQMMQQPQQQQQMQQPQQQLPHSHHALMQQSQQQQAIHRAEARRA</original>
    <variation>AAMSADIVPMEQVSSMVSNGGGSVAMQRDDEYRNRIMKIRRLGLLQSIKISDRTDSLWQVTATSMQQPPPQRHGRPAPQHQHSQHNQHHQHQNQWALHHQNHLNQTPRSTGRQTMLGSNHSSQRETSVSPRRVALDTTASGSTTGFGFDRDTQAKHSHGFLYS</variation>
    <location>
        <begin position="2"/>
        <end position="163"/>
    </location>
</feature>
<feature type="splice variant" id="VSP_052613" description="In isoform C." evidence="6 8">
    <original>PDSMMDMEHRDHQLHRQQQQSHHHQPPRLTASTSTFAPPAPAGSQSEERDRDRDR</original>
    <variation>AAMSADIVPMEQVSSMVSNGGGSVAMQRDDEYRNRIMKIRRLDTQAKHSHGFLYS</variation>
    <location>
        <begin position="2"/>
        <end position="56"/>
    </location>
</feature>
<feature type="splice variant" id="VSP_052614" description="In isoform A." evidence="6 7">
    <original>PDSMMDMEHRDHQLHRQQQQSHHHQPPRLTASTSTFAPPAPAGSQSEERDRDR</original>
    <variation>VEEFLEKLPEIDTRYEDIVPMEQVSSMVSNGGGSVAMQRDDEYRNRIMKIRRL</variation>
    <location>
        <begin position="2"/>
        <end position="54"/>
    </location>
</feature>
<feature type="splice variant" id="VSP_052615" description="In isoform A." evidence="6 7">
    <location>
        <begin position="55"/>
        <end position="162"/>
    </location>
</feature>
<feature type="splice variant" id="VSP_052616" description="In isoform C." evidence="6 8">
    <location>
        <begin position="57"/>
        <end position="163"/>
    </location>
</feature>
<feature type="sequence variant" description="In RNA edited version." evidence="5">
    <original>N</original>
    <variation>D</variation>
    <location>
        <position position="297"/>
    </location>
</feature>
<name>BND7A_DROME</name>
<protein>
    <recommendedName>
        <fullName>Band 7 protein CG42540</fullName>
    </recommendedName>
</protein>
<organism>
    <name type="scientific">Drosophila melanogaster</name>
    <name type="common">Fruit fly</name>
    <dbReference type="NCBI Taxonomy" id="7227"/>
    <lineage>
        <taxon>Eukaryota</taxon>
        <taxon>Metazoa</taxon>
        <taxon>Ecdysozoa</taxon>
        <taxon>Arthropoda</taxon>
        <taxon>Hexapoda</taxon>
        <taxon>Insecta</taxon>
        <taxon>Pterygota</taxon>
        <taxon>Neoptera</taxon>
        <taxon>Endopterygota</taxon>
        <taxon>Diptera</taxon>
        <taxon>Brachycera</taxon>
        <taxon>Muscomorpha</taxon>
        <taxon>Ephydroidea</taxon>
        <taxon>Drosophilidae</taxon>
        <taxon>Drosophila</taxon>
        <taxon>Sophophora</taxon>
    </lineage>
</organism>